<proteinExistence type="inferred from homology"/>
<evidence type="ECO:0000255" key="1">
    <source>
        <dbReference type="HAMAP-Rule" id="MF_00041"/>
    </source>
</evidence>
<name>SYC_ALKOO</name>
<reference key="1">
    <citation type="submission" date="2007-10" db="EMBL/GenBank/DDBJ databases">
        <title>Complete genome of Alkaliphilus oremlandii OhILAs.</title>
        <authorList>
            <person name="Copeland A."/>
            <person name="Lucas S."/>
            <person name="Lapidus A."/>
            <person name="Barry K."/>
            <person name="Detter J.C."/>
            <person name="Glavina del Rio T."/>
            <person name="Hammon N."/>
            <person name="Israni S."/>
            <person name="Dalin E."/>
            <person name="Tice H."/>
            <person name="Pitluck S."/>
            <person name="Chain P."/>
            <person name="Malfatti S."/>
            <person name="Shin M."/>
            <person name="Vergez L."/>
            <person name="Schmutz J."/>
            <person name="Larimer F."/>
            <person name="Land M."/>
            <person name="Hauser L."/>
            <person name="Kyrpides N."/>
            <person name="Mikhailova N."/>
            <person name="Stolz J.F."/>
            <person name="Dawson A."/>
            <person name="Fisher E."/>
            <person name="Crable B."/>
            <person name="Perera E."/>
            <person name="Lisak J."/>
            <person name="Ranganathan M."/>
            <person name="Basu P."/>
            <person name="Richardson P."/>
        </authorList>
    </citation>
    <scope>NUCLEOTIDE SEQUENCE [LARGE SCALE GENOMIC DNA]</scope>
    <source>
        <strain>OhILAs</strain>
    </source>
</reference>
<accession>A8MLB7</accession>
<gene>
    <name evidence="1" type="primary">cysS</name>
    <name type="ordered locus">Clos_0469</name>
</gene>
<dbReference type="EC" id="6.1.1.16" evidence="1"/>
<dbReference type="EMBL" id="CP000853">
    <property type="protein sequence ID" value="ABW18031.1"/>
    <property type="molecule type" value="Genomic_DNA"/>
</dbReference>
<dbReference type="RefSeq" id="WP_012158346.1">
    <property type="nucleotide sequence ID" value="NC_009922.1"/>
</dbReference>
<dbReference type="SMR" id="A8MLB7"/>
<dbReference type="STRING" id="350688.Clos_0469"/>
<dbReference type="KEGG" id="aoe:Clos_0469"/>
<dbReference type="eggNOG" id="COG0215">
    <property type="taxonomic scope" value="Bacteria"/>
</dbReference>
<dbReference type="HOGENOM" id="CLU_013528_0_1_9"/>
<dbReference type="OrthoDB" id="9815130at2"/>
<dbReference type="Proteomes" id="UP000000269">
    <property type="component" value="Chromosome"/>
</dbReference>
<dbReference type="GO" id="GO:0005829">
    <property type="term" value="C:cytosol"/>
    <property type="evidence" value="ECO:0007669"/>
    <property type="project" value="TreeGrafter"/>
</dbReference>
<dbReference type="GO" id="GO:0005524">
    <property type="term" value="F:ATP binding"/>
    <property type="evidence" value="ECO:0007669"/>
    <property type="project" value="UniProtKB-UniRule"/>
</dbReference>
<dbReference type="GO" id="GO:0004817">
    <property type="term" value="F:cysteine-tRNA ligase activity"/>
    <property type="evidence" value="ECO:0007669"/>
    <property type="project" value="UniProtKB-UniRule"/>
</dbReference>
<dbReference type="GO" id="GO:0008270">
    <property type="term" value="F:zinc ion binding"/>
    <property type="evidence" value="ECO:0007669"/>
    <property type="project" value="UniProtKB-UniRule"/>
</dbReference>
<dbReference type="GO" id="GO:0006423">
    <property type="term" value="P:cysteinyl-tRNA aminoacylation"/>
    <property type="evidence" value="ECO:0007669"/>
    <property type="project" value="UniProtKB-UniRule"/>
</dbReference>
<dbReference type="CDD" id="cd00672">
    <property type="entry name" value="CysRS_core"/>
    <property type="match status" value="1"/>
</dbReference>
<dbReference type="FunFam" id="3.40.50.620:FF:000009">
    <property type="entry name" value="Cysteine--tRNA ligase"/>
    <property type="match status" value="1"/>
</dbReference>
<dbReference type="Gene3D" id="1.20.120.1910">
    <property type="entry name" value="Cysteine-tRNA ligase, C-terminal anti-codon recognition domain"/>
    <property type="match status" value="1"/>
</dbReference>
<dbReference type="Gene3D" id="3.40.50.620">
    <property type="entry name" value="HUPs"/>
    <property type="match status" value="1"/>
</dbReference>
<dbReference type="HAMAP" id="MF_00041">
    <property type="entry name" value="Cys_tRNA_synth"/>
    <property type="match status" value="1"/>
</dbReference>
<dbReference type="InterPro" id="IPR015803">
    <property type="entry name" value="Cys-tRNA-ligase"/>
</dbReference>
<dbReference type="InterPro" id="IPR015273">
    <property type="entry name" value="Cys-tRNA-synt_Ia_DALR"/>
</dbReference>
<dbReference type="InterPro" id="IPR024909">
    <property type="entry name" value="Cys-tRNA/MSH_ligase"/>
</dbReference>
<dbReference type="InterPro" id="IPR056411">
    <property type="entry name" value="CysS_C"/>
</dbReference>
<dbReference type="InterPro" id="IPR014729">
    <property type="entry name" value="Rossmann-like_a/b/a_fold"/>
</dbReference>
<dbReference type="InterPro" id="IPR032678">
    <property type="entry name" value="tRNA-synt_1_cat_dom"/>
</dbReference>
<dbReference type="InterPro" id="IPR009080">
    <property type="entry name" value="tRNAsynth_Ia_anticodon-bd"/>
</dbReference>
<dbReference type="NCBIfam" id="TIGR00435">
    <property type="entry name" value="cysS"/>
    <property type="match status" value="1"/>
</dbReference>
<dbReference type="PANTHER" id="PTHR10890:SF3">
    <property type="entry name" value="CYSTEINE--TRNA LIGASE, CYTOPLASMIC"/>
    <property type="match status" value="1"/>
</dbReference>
<dbReference type="PANTHER" id="PTHR10890">
    <property type="entry name" value="CYSTEINYL-TRNA SYNTHETASE"/>
    <property type="match status" value="1"/>
</dbReference>
<dbReference type="Pfam" id="PF23493">
    <property type="entry name" value="CysS_C"/>
    <property type="match status" value="1"/>
</dbReference>
<dbReference type="Pfam" id="PF09190">
    <property type="entry name" value="DALR_2"/>
    <property type="match status" value="1"/>
</dbReference>
<dbReference type="Pfam" id="PF01406">
    <property type="entry name" value="tRNA-synt_1e"/>
    <property type="match status" value="1"/>
</dbReference>
<dbReference type="PRINTS" id="PR00983">
    <property type="entry name" value="TRNASYNTHCYS"/>
</dbReference>
<dbReference type="SMART" id="SM00840">
    <property type="entry name" value="DALR_2"/>
    <property type="match status" value="1"/>
</dbReference>
<dbReference type="SUPFAM" id="SSF47323">
    <property type="entry name" value="Anticodon-binding domain of a subclass of class I aminoacyl-tRNA synthetases"/>
    <property type="match status" value="1"/>
</dbReference>
<dbReference type="SUPFAM" id="SSF52374">
    <property type="entry name" value="Nucleotidylyl transferase"/>
    <property type="match status" value="1"/>
</dbReference>
<organism>
    <name type="scientific">Alkaliphilus oremlandii (strain OhILAs)</name>
    <name type="common">Clostridium oremlandii (strain OhILAs)</name>
    <dbReference type="NCBI Taxonomy" id="350688"/>
    <lineage>
        <taxon>Bacteria</taxon>
        <taxon>Bacillati</taxon>
        <taxon>Bacillota</taxon>
        <taxon>Clostridia</taxon>
        <taxon>Peptostreptococcales</taxon>
        <taxon>Natronincolaceae</taxon>
        <taxon>Alkaliphilus</taxon>
    </lineage>
</organism>
<sequence>MKLYNTLTRKKEEFIPLEEGKVRMYACGPTVYNYFHIGNARTFMVFDALRRYLIYRGYDVTFVQNFTDVDDKIIRRANEEGVAPEEISERFIKEYFYDAGTLGIEKADIHPKVTENMAEIIAFVAKLVEKGHAYESNGDVYFDVSKYEEYGKLSKQSLEDLQAGARIEINEYKKNPLDFALWKSAKAGEPSWESPWGNGRPGWHIECSAMAKRYLGETIDIHGGGGDLVFPHHENEIAQSEACSGKKFANYWLHVGYLNVDNKKMSKSLNNFFTPREISEEFDLENLRFFMLSAHYRNPINFSRDLLEAAKNGLDRLYTGKNNLEYLLENAAEREVSEEEKNFIHGLQSFKNQFIDAVDDDFNTADGIAVIFDLVREINSHISEKNSKKAVEASYDLLMELTGVLGLLKREAEDLEEEIERLIAERQQARKDKNFALSDKIRDDLKEKGIVLEDTAQGVKWRKL</sequence>
<keyword id="KW-0030">Aminoacyl-tRNA synthetase</keyword>
<keyword id="KW-0067">ATP-binding</keyword>
<keyword id="KW-0963">Cytoplasm</keyword>
<keyword id="KW-0436">Ligase</keyword>
<keyword id="KW-0479">Metal-binding</keyword>
<keyword id="KW-0547">Nucleotide-binding</keyword>
<keyword id="KW-0648">Protein biosynthesis</keyword>
<keyword id="KW-1185">Reference proteome</keyword>
<keyword id="KW-0862">Zinc</keyword>
<comment type="catalytic activity">
    <reaction evidence="1">
        <text>tRNA(Cys) + L-cysteine + ATP = L-cysteinyl-tRNA(Cys) + AMP + diphosphate</text>
        <dbReference type="Rhea" id="RHEA:17773"/>
        <dbReference type="Rhea" id="RHEA-COMP:9661"/>
        <dbReference type="Rhea" id="RHEA-COMP:9679"/>
        <dbReference type="ChEBI" id="CHEBI:30616"/>
        <dbReference type="ChEBI" id="CHEBI:33019"/>
        <dbReference type="ChEBI" id="CHEBI:35235"/>
        <dbReference type="ChEBI" id="CHEBI:78442"/>
        <dbReference type="ChEBI" id="CHEBI:78517"/>
        <dbReference type="ChEBI" id="CHEBI:456215"/>
        <dbReference type="EC" id="6.1.1.16"/>
    </reaction>
</comment>
<comment type="cofactor">
    <cofactor evidence="1">
        <name>Zn(2+)</name>
        <dbReference type="ChEBI" id="CHEBI:29105"/>
    </cofactor>
    <text evidence="1">Binds 1 zinc ion per subunit.</text>
</comment>
<comment type="subunit">
    <text evidence="1">Monomer.</text>
</comment>
<comment type="subcellular location">
    <subcellularLocation>
        <location evidence="1">Cytoplasm</location>
    </subcellularLocation>
</comment>
<comment type="similarity">
    <text evidence="1">Belongs to the class-I aminoacyl-tRNA synthetase family.</text>
</comment>
<protein>
    <recommendedName>
        <fullName evidence="1">Cysteine--tRNA ligase</fullName>
        <ecNumber evidence="1">6.1.1.16</ecNumber>
    </recommendedName>
    <alternativeName>
        <fullName evidence="1">Cysteinyl-tRNA synthetase</fullName>
        <shortName evidence="1">CysRS</shortName>
    </alternativeName>
</protein>
<feature type="chain" id="PRO_0000332785" description="Cysteine--tRNA ligase">
    <location>
        <begin position="1"/>
        <end position="464"/>
    </location>
</feature>
<feature type="short sequence motif" description="'HIGH' region">
    <location>
        <begin position="29"/>
        <end position="39"/>
    </location>
</feature>
<feature type="short sequence motif" description="'KMSKS' region">
    <location>
        <begin position="264"/>
        <end position="268"/>
    </location>
</feature>
<feature type="binding site" evidence="1">
    <location>
        <position position="27"/>
    </location>
    <ligand>
        <name>Zn(2+)</name>
        <dbReference type="ChEBI" id="CHEBI:29105"/>
    </ligand>
</feature>
<feature type="binding site" evidence="1">
    <location>
        <position position="207"/>
    </location>
    <ligand>
        <name>Zn(2+)</name>
        <dbReference type="ChEBI" id="CHEBI:29105"/>
    </ligand>
</feature>
<feature type="binding site" evidence="1">
    <location>
        <position position="232"/>
    </location>
    <ligand>
        <name>Zn(2+)</name>
        <dbReference type="ChEBI" id="CHEBI:29105"/>
    </ligand>
</feature>
<feature type="binding site" evidence="1">
    <location>
        <position position="236"/>
    </location>
    <ligand>
        <name>Zn(2+)</name>
        <dbReference type="ChEBI" id="CHEBI:29105"/>
    </ligand>
</feature>
<feature type="binding site" evidence="1">
    <location>
        <position position="267"/>
    </location>
    <ligand>
        <name>ATP</name>
        <dbReference type="ChEBI" id="CHEBI:30616"/>
    </ligand>
</feature>